<gene>
    <name evidence="9" type="primary">Stim1</name>
    <name evidence="2" type="synonym">Sim</name>
</gene>
<name>STIM1_RAT</name>
<proteinExistence type="evidence at protein level"/>
<protein>
    <recommendedName>
        <fullName>Stromal interaction molecule 1</fullName>
    </recommendedName>
</protein>
<sequence>MDVCARLALWLLWGLLLHQGQSLSHSHSEKNTGASSGATSEESTEAEFCRIDKPLCHSEDEKLSFEAVRNIHKLMDDDANGDVDVEESDEFLREDLNYHDPTVKHSTFHGEDKLISVEDLWKAWKASEVYNWTVDEVIQWLITYVELPQYEETFRKLQLTGHAMPRLAVTNTTMTGTVLKMTDRSHRQKLQLKALDTVLFGPPLLTRHNHLKDFMLVVSIVIGVGGCWFAYIQNRYSKEHMKKMMKDLEGLHRAEQSLHDLQERLHKAQEEHRTVEVEKVHLEKKLRDEINLAKQEAQRLKELREGTENERSRQKYAEEELEQVREALRKAEKELESHSSWYAPEALQKWLQLTHEVEVQYYNIKKQNAERQLLVAKEGAEKIKKKRNTLFGTFHVAHSSSLDDVDHKILTAKQALSEVTAALRERLHRWQQIEILCGFQIVNNPGIHSLVAALNIDPSWMGSTRPNPAHFIMTDDVDDMDEEIVSPLSMQSPSLQSSVRQRLTEPQHGLGSQRDLTHSDSESSLHTSDRQRVAPKPPQMGRAADEALNATSSNGSHRLIEGVHPGSLVEKLPDSPALAKKTILALNHGLDKAHSLMELNPSVPPGGSPLLDSSHSHSPSSPDPDTPSPVGDSRALQGSRNTRIPHLAGKKAMAEEDNGSIGEETDSSPGRKKFPLKIFKKPLKK</sequence>
<dbReference type="EMBL" id="AABR03000423">
    <property type="status" value="NOT_ANNOTATED_CDS"/>
    <property type="molecule type" value="Genomic_DNA"/>
</dbReference>
<dbReference type="EMBL" id="AABR03002698">
    <property type="status" value="NOT_ANNOTATED_CDS"/>
    <property type="molecule type" value="Genomic_DNA"/>
</dbReference>
<dbReference type="RefSeq" id="NP_001101966.2">
    <property type="nucleotide sequence ID" value="NM_001108496.2"/>
</dbReference>
<dbReference type="RefSeq" id="XP_063123303.1">
    <property type="nucleotide sequence ID" value="XM_063267233.1"/>
</dbReference>
<dbReference type="SMR" id="P84903"/>
<dbReference type="BioGRID" id="262820">
    <property type="interactions" value="2"/>
</dbReference>
<dbReference type="CORUM" id="P84903"/>
<dbReference type="FunCoup" id="P84903">
    <property type="interactions" value="2941"/>
</dbReference>
<dbReference type="IntAct" id="P84903">
    <property type="interactions" value="1"/>
</dbReference>
<dbReference type="STRING" id="10116.ENSRNOP00000027685"/>
<dbReference type="BindingDB" id="P84903"/>
<dbReference type="ChEMBL" id="CHEMBL3832645"/>
<dbReference type="GlyCosmos" id="P84903">
    <property type="glycosylation" value="2 sites, No reported glycans"/>
</dbReference>
<dbReference type="GlyGen" id="P84903">
    <property type="glycosylation" value="3 sites, 1 O-linked glycan (1 site)"/>
</dbReference>
<dbReference type="iPTMnet" id="P84903"/>
<dbReference type="PhosphoSitePlus" id="P84903"/>
<dbReference type="jPOST" id="P84903"/>
<dbReference type="PaxDb" id="10116-ENSRNOP00000027685"/>
<dbReference type="GeneID" id="361618"/>
<dbReference type="KEGG" id="rno:361618"/>
<dbReference type="UCSC" id="RGD:1306831">
    <property type="organism name" value="rat"/>
</dbReference>
<dbReference type="AGR" id="RGD:1306831"/>
<dbReference type="CTD" id="6786"/>
<dbReference type="RGD" id="1306831">
    <property type="gene designation" value="Stim1"/>
</dbReference>
<dbReference type="VEuPathDB" id="HostDB:ENSRNOG00000020425"/>
<dbReference type="eggNOG" id="KOG4403">
    <property type="taxonomic scope" value="Eukaryota"/>
</dbReference>
<dbReference type="HOGENOM" id="CLU_010588_0_0_1"/>
<dbReference type="InParanoid" id="P84903"/>
<dbReference type="OrthoDB" id="45922at9989"/>
<dbReference type="PhylomeDB" id="P84903"/>
<dbReference type="TreeFam" id="TF313487"/>
<dbReference type="Reactome" id="R-RNO-5578775">
    <property type="pathway name" value="Ion homeostasis"/>
</dbReference>
<dbReference type="Reactome" id="R-RNO-983695">
    <property type="pathway name" value="Antigen activates B Cell Receptor (BCR) leading to generation of second messengers"/>
</dbReference>
<dbReference type="PRO" id="PR:P84903"/>
<dbReference type="Proteomes" id="UP000002494">
    <property type="component" value="Chromosome 1"/>
</dbReference>
<dbReference type="Bgee" id="ENSRNOG00000020425">
    <property type="expression patterns" value="Expressed in skeletal muscle tissue and 19 other cell types or tissues"/>
</dbReference>
<dbReference type="ExpressionAtlas" id="P84903">
    <property type="expression patterns" value="baseline and differential"/>
</dbReference>
<dbReference type="GO" id="GO:0032541">
    <property type="term" value="C:cortical endoplasmic reticulum"/>
    <property type="evidence" value="ECO:0000266"/>
    <property type="project" value="RGD"/>
</dbReference>
<dbReference type="GO" id="GO:0005783">
    <property type="term" value="C:endoplasmic reticulum"/>
    <property type="evidence" value="ECO:0000266"/>
    <property type="project" value="RGD"/>
</dbReference>
<dbReference type="GO" id="GO:0005789">
    <property type="term" value="C:endoplasmic reticulum membrane"/>
    <property type="evidence" value="ECO:0000250"/>
    <property type="project" value="UniProtKB"/>
</dbReference>
<dbReference type="GO" id="GO:0030426">
    <property type="term" value="C:growth cone"/>
    <property type="evidence" value="ECO:0000314"/>
    <property type="project" value="RGD"/>
</dbReference>
<dbReference type="GO" id="GO:0005874">
    <property type="term" value="C:microtubule"/>
    <property type="evidence" value="ECO:0007669"/>
    <property type="project" value="UniProtKB-KW"/>
</dbReference>
<dbReference type="GO" id="GO:0005886">
    <property type="term" value="C:plasma membrane"/>
    <property type="evidence" value="ECO:0000250"/>
    <property type="project" value="UniProtKB"/>
</dbReference>
<dbReference type="GO" id="GO:0044853">
    <property type="term" value="C:plasma membrane raft"/>
    <property type="evidence" value="ECO:0000250"/>
    <property type="project" value="UniProtKB"/>
</dbReference>
<dbReference type="GO" id="GO:0033017">
    <property type="term" value="C:sarcoplasmic reticulum membrane"/>
    <property type="evidence" value="ECO:0000250"/>
    <property type="project" value="UniProtKB"/>
</dbReference>
<dbReference type="GO" id="GO:0045202">
    <property type="term" value="C:synapse"/>
    <property type="evidence" value="ECO:0007669"/>
    <property type="project" value="GOC"/>
</dbReference>
<dbReference type="GO" id="GO:0005246">
    <property type="term" value="F:calcium channel regulator activity"/>
    <property type="evidence" value="ECO:0000315"/>
    <property type="project" value="RGD"/>
</dbReference>
<dbReference type="GO" id="GO:0005509">
    <property type="term" value="F:calcium ion binding"/>
    <property type="evidence" value="ECO:0000250"/>
    <property type="project" value="UniProtKB"/>
</dbReference>
<dbReference type="GO" id="GO:0099103">
    <property type="term" value="F:channel activator activity"/>
    <property type="evidence" value="ECO:0000266"/>
    <property type="project" value="RGD"/>
</dbReference>
<dbReference type="GO" id="GO:0042802">
    <property type="term" value="F:identical protein binding"/>
    <property type="evidence" value="ECO:0000266"/>
    <property type="project" value="RGD"/>
</dbReference>
<dbReference type="GO" id="GO:0099107">
    <property type="term" value="F:ion channel regulator activity involved in G protein-coupled receptor signaling pathway"/>
    <property type="evidence" value="ECO:0000266"/>
    <property type="project" value="RGD"/>
</dbReference>
<dbReference type="GO" id="GO:0051010">
    <property type="term" value="F:microtubule plus-end binding"/>
    <property type="evidence" value="ECO:0000250"/>
    <property type="project" value="UniProtKB"/>
</dbReference>
<dbReference type="GO" id="GO:0002020">
    <property type="term" value="F:protease binding"/>
    <property type="evidence" value="ECO:0000266"/>
    <property type="project" value="RGD"/>
</dbReference>
<dbReference type="GO" id="GO:0015279">
    <property type="term" value="F:store-operated calcium channel activity"/>
    <property type="evidence" value="ECO:0000315"/>
    <property type="project" value="RGD"/>
</dbReference>
<dbReference type="GO" id="GO:0032237">
    <property type="term" value="P:activation of store-operated calcium channel activity"/>
    <property type="evidence" value="ECO:0000250"/>
    <property type="project" value="UniProtKB"/>
</dbReference>
<dbReference type="GO" id="GO:0005513">
    <property type="term" value="P:detection of calcium ion"/>
    <property type="evidence" value="ECO:0000250"/>
    <property type="project" value="UniProtKB"/>
</dbReference>
<dbReference type="GO" id="GO:0070166">
    <property type="term" value="P:enamel mineralization"/>
    <property type="evidence" value="ECO:0000250"/>
    <property type="project" value="UniProtKB"/>
</dbReference>
<dbReference type="GO" id="GO:0051649">
    <property type="term" value="P:establishment of localization in cell"/>
    <property type="evidence" value="ECO:0000266"/>
    <property type="project" value="RGD"/>
</dbReference>
<dbReference type="GO" id="GO:0006874">
    <property type="term" value="P:intracellular calcium ion homeostasis"/>
    <property type="evidence" value="ECO:0000318"/>
    <property type="project" value="GO_Central"/>
</dbReference>
<dbReference type="GO" id="GO:1990806">
    <property type="term" value="P:ligand-gated ion channel signaling pathway"/>
    <property type="evidence" value="ECO:0000266"/>
    <property type="project" value="RGD"/>
</dbReference>
<dbReference type="GO" id="GO:0006812">
    <property type="term" value="P:monoatomic cation transport"/>
    <property type="evidence" value="ECO:0000266"/>
    <property type="project" value="RGD"/>
</dbReference>
<dbReference type="GO" id="GO:0014902">
    <property type="term" value="P:myotube differentiation"/>
    <property type="evidence" value="ECO:0000266"/>
    <property type="project" value="RGD"/>
</dbReference>
<dbReference type="GO" id="GO:0007207">
    <property type="term" value="P:phospholipase C-activating G protein-coupled acetylcholine receptor signaling pathway"/>
    <property type="evidence" value="ECO:0000266"/>
    <property type="project" value="RGD"/>
</dbReference>
<dbReference type="GO" id="GO:0007200">
    <property type="term" value="P:phospholipase C-activating G protein-coupled receptor signaling pathway"/>
    <property type="evidence" value="ECO:0000266"/>
    <property type="project" value="RGD"/>
</dbReference>
<dbReference type="GO" id="GO:0045762">
    <property type="term" value="P:positive regulation of adenylate cyclase activity"/>
    <property type="evidence" value="ECO:0000250"/>
    <property type="project" value="UniProtKB"/>
</dbReference>
<dbReference type="GO" id="GO:0045766">
    <property type="term" value="P:positive regulation of angiogenesis"/>
    <property type="evidence" value="ECO:0000266"/>
    <property type="project" value="RGD"/>
</dbReference>
<dbReference type="GO" id="GO:0032024">
    <property type="term" value="P:positive regulation of insulin secretion"/>
    <property type="evidence" value="ECO:0000266"/>
    <property type="project" value="RGD"/>
</dbReference>
<dbReference type="GO" id="GO:0051924">
    <property type="term" value="P:regulation of calcium ion transport"/>
    <property type="evidence" value="ECO:0000250"/>
    <property type="project" value="UniProtKB"/>
</dbReference>
<dbReference type="GO" id="GO:2001256">
    <property type="term" value="P:regulation of store-operated calcium entry"/>
    <property type="evidence" value="ECO:0000315"/>
    <property type="project" value="RGD"/>
</dbReference>
<dbReference type="GO" id="GO:0002115">
    <property type="term" value="P:store-operated calcium entry"/>
    <property type="evidence" value="ECO:0000314"/>
    <property type="project" value="RGD"/>
</dbReference>
<dbReference type="CDD" id="cd09573">
    <property type="entry name" value="SAM_STIM1"/>
    <property type="match status" value="1"/>
</dbReference>
<dbReference type="CDD" id="cd11722">
    <property type="entry name" value="SOAR"/>
    <property type="match status" value="1"/>
</dbReference>
<dbReference type="FunFam" id="1.10.150.50:FF:000009">
    <property type="entry name" value="Stromal interaction molecule 1"/>
    <property type="match status" value="1"/>
</dbReference>
<dbReference type="FunFam" id="1.10.238.180:FF:000001">
    <property type="entry name" value="Stromal interaction molecule 1"/>
    <property type="match status" value="1"/>
</dbReference>
<dbReference type="FunFam" id="1.10.287.3550:FF:000001">
    <property type="entry name" value="Stromal interaction molecule 1"/>
    <property type="match status" value="1"/>
</dbReference>
<dbReference type="FunFam" id="1.20.5.340:FF:000011">
    <property type="entry name" value="Stromal interaction molecule 1"/>
    <property type="match status" value="1"/>
</dbReference>
<dbReference type="Gene3D" id="1.10.238.180">
    <property type="match status" value="1"/>
</dbReference>
<dbReference type="Gene3D" id="1.10.287.3550">
    <property type="match status" value="1"/>
</dbReference>
<dbReference type="Gene3D" id="1.20.5.340">
    <property type="match status" value="1"/>
</dbReference>
<dbReference type="Gene3D" id="1.10.150.50">
    <property type="entry name" value="Transcription Factor, Ets-1"/>
    <property type="match status" value="1"/>
</dbReference>
<dbReference type="InterPro" id="IPR001660">
    <property type="entry name" value="SAM"/>
</dbReference>
<dbReference type="InterPro" id="IPR013761">
    <property type="entry name" value="SAM/pointed_sf"/>
</dbReference>
<dbReference type="InterPro" id="IPR032393">
    <property type="entry name" value="SOAR"/>
</dbReference>
<dbReference type="InterPro" id="IPR037608">
    <property type="entry name" value="STIM"/>
</dbReference>
<dbReference type="InterPro" id="IPR037609">
    <property type="entry name" value="STIM1_SAM"/>
</dbReference>
<dbReference type="PANTHER" id="PTHR15136:SF9">
    <property type="entry name" value="STROMAL INTERACTION MOLECULE 1"/>
    <property type="match status" value="1"/>
</dbReference>
<dbReference type="PANTHER" id="PTHR15136">
    <property type="entry name" value="STROMAL INTERACTION MOLECULE HOMOLOG"/>
    <property type="match status" value="1"/>
</dbReference>
<dbReference type="Pfam" id="PF07647">
    <property type="entry name" value="SAM_2"/>
    <property type="match status" value="1"/>
</dbReference>
<dbReference type="Pfam" id="PF16533">
    <property type="entry name" value="SOAR"/>
    <property type="match status" value="1"/>
</dbReference>
<dbReference type="SMART" id="SM00454">
    <property type="entry name" value="SAM"/>
    <property type="match status" value="1"/>
</dbReference>
<dbReference type="SUPFAM" id="SSF47769">
    <property type="entry name" value="SAM/Pointed domain"/>
    <property type="match status" value="1"/>
</dbReference>
<dbReference type="PROSITE" id="PS50105">
    <property type="entry name" value="SAM_DOMAIN"/>
    <property type="match status" value="1"/>
</dbReference>
<evidence type="ECO:0000250" key="1">
    <source>
        <dbReference type="UniProtKB" id="P70302"/>
    </source>
</evidence>
<evidence type="ECO:0000250" key="2">
    <source>
        <dbReference type="UniProtKB" id="Q13586"/>
    </source>
</evidence>
<evidence type="ECO:0000255" key="3"/>
<evidence type="ECO:0000255" key="4">
    <source>
        <dbReference type="PROSITE-ProRule" id="PRU00184"/>
    </source>
</evidence>
<evidence type="ECO:0000256" key="5">
    <source>
        <dbReference type="SAM" id="MobiDB-lite"/>
    </source>
</evidence>
<evidence type="ECO:0000269" key="6">
    <source>
    </source>
</evidence>
<evidence type="ECO:0000269" key="7">
    <source>
    </source>
</evidence>
<evidence type="ECO:0000305" key="8"/>
<evidence type="ECO:0000312" key="9">
    <source>
        <dbReference type="RGD" id="1306831"/>
    </source>
</evidence>
<evidence type="ECO:0007744" key="10">
    <source>
    </source>
</evidence>
<comment type="function">
    <text evidence="2 7">Acts as a Ca(2+) sensor that gates two major inward rectifying Ca(2+) channels at the plasma membrane: Ca(2+) release-activated Ca(2+) (CRAC) channels and arachidonate-regulated Ca(2+)-selective (ARC) channels (By similarity) (PubMed:16208375). Plays a role in mediating store-operated Ca(2+) entry (SOCE), a Ca(2+) influx following depletion of intracellular Ca(2+) stores. Upon Ca(2+) depletion, translocates from the endoplasmic reticulum to the plasma membrane where it activates CRAC channel pore-forming subunits ORA1, ORA2 and ORAI3 to generate sustained and oscillatory Ca(2+) entry (By similarity) (PubMed:16208375). Involved in enamel formation (By similarity).</text>
</comment>
<comment type="subunit">
    <text evidence="1 2">Monomer in the presence of Ca(2+). It oligomerizes in absence of Ca(2+). Forms homooligomers and heterooligomers with STIM2. Interacts with pore-forming subunits of CRAC channels, ORAI1, ORAI2 and ORAI3; this interaction is potentiated upon Ca(2+) store depletion. Interacts (via the transmembrane region and the SOAR/CAD domain) with SPPL3; the interaction promotes the binding of STIM1 to ORAI1. Interacts with ORAI1. Interacts with MAPRE1; probably required for targeting to the growing microtubule plus ends. Interacts with CRACR2A/EFCAB4B; the interaction is direct and takes place in absence of Ca(2+). Forms a complex with CRACR2A/EFCAB4B and ORAI1 at low concentration of Ca(2+), the complex dissociates at elevated Ca(2+) concentrations. Interacts with SARAF, promoting a slow inactivation of STIM1-dependent SOCE activity, possibly by facilitating the deoligomerization of STIM1 (By similarity). Interacts with EFHB; the interaction takes place upon Ca(2+)-store depletion and inhibits the association with SARAF (By similarity). Interacts with ASPH. Interacts with SLC35G1; intracellular Ca(2+)-dependent. May interact with ATP1A1, ATP2A2, ATP2B1, ATP2B4, KPNB1 and XPO1; through SLC35G1. Interacts with TMEM203. Interacts with STIMATE, promoting STIM1 conformational switch (By similarity). Interacts with TMEM178A (By similarity). Interacts with CASQ1 (via C-terminal end and preferentially with the monomeric form); this interaction increases in response to a depletion of intracellular Ca(2+), decreases both STIM1 aggregation and clustering, interaction of STIM1 with ORAI1 and store-operated Ca(2+) entry (SOCE) activity (By similarity). Interacts with ADCY8 (By similarity).</text>
</comment>
<comment type="subcellular location">
    <subcellularLocation>
        <location evidence="7">Cell membrane</location>
        <topology evidence="7">Single-pass type I membrane protein</topology>
    </subcellularLocation>
    <subcellularLocation>
        <location evidence="7">Endoplasmic reticulum membrane</location>
        <topology evidence="7">Single-pass type I membrane protein</topology>
    </subcellularLocation>
    <subcellularLocation>
        <location evidence="2">Sarcoplasmic reticulum</location>
    </subcellularLocation>
    <subcellularLocation>
        <location evidence="7">Cytoplasm</location>
        <location evidence="7">Cytoskeleton</location>
    </subcellularLocation>
    <text evidence="2">Translocates from the endoplasmic reticulum to the cell membrane in response to a depletion of intracellular calcium and is detected at punctae corresponding to junctions between the endoplasmic reticulum and the cell membrane. Associated with the microtubule network at the growing distal tip of microtubules. Colocalizes with ORAI1 at the cell membrane. Colocalizes preferentially with CASQ1 at endoplasmic reticulum in response to a depletion of intracellular calcium (By similarity).</text>
</comment>
<comment type="domain">
    <text evidence="2">The microtubule tip localization signal (MtLS) motif; mediates interaction with MAPRE1 and targeting to the growing microtubule plus ends.</text>
</comment>
<comment type="domain">
    <text evidence="2">The EF-hand domain is responsible for Ca(2+) sensitivity. It consists of a canonical helix-loop-helix EF motif (alpha1beta1alpha2; EF-hand 1) paired to a second helix-loop-helix EF motif (alpha3beta2alpha4; EF-hand 2). EF-hand 1 binds Ca(2+) whereas EF-hand 2 mediates the interactions with SAM domain.</text>
</comment>
<comment type="domain">
    <text evidence="2">The sterile alpha motif (SAM) domain folds into a characteristic 5-helix bundle (alpha6-alpha10) which interacts with the EF-hand pairs enabling concerted folding and stability of EF-hand and SAM domains.</text>
</comment>
<comment type="domain">
    <text evidence="2">The STIM1 Orai-activating region/CRAC-activating domain (SOAR/CAD) directly interacts with ORAI1 subunits and mediates CRAC channel gating.</text>
</comment>
<comment type="domain">
    <text evidence="2">The polybasic Lys-rich region (residues 672-685) functionally interacts with the Pro-rich region of ORAI1 (residues 3-47) and regulates CRAC channel gating at negative membrane potentials.</text>
</comment>
<comment type="PTM">
    <text evidence="2">Glycosylation is required for cell surface expression.</text>
</comment>
<comment type="PTM">
    <text evidence="2">Phosphorylated predominantly on Ser residues.</text>
</comment>
<organism>
    <name type="scientific">Rattus norvegicus</name>
    <name type="common">Rat</name>
    <dbReference type="NCBI Taxonomy" id="10116"/>
    <lineage>
        <taxon>Eukaryota</taxon>
        <taxon>Metazoa</taxon>
        <taxon>Chordata</taxon>
        <taxon>Craniata</taxon>
        <taxon>Vertebrata</taxon>
        <taxon>Euteleostomi</taxon>
        <taxon>Mammalia</taxon>
        <taxon>Eutheria</taxon>
        <taxon>Euarchontoglires</taxon>
        <taxon>Glires</taxon>
        <taxon>Rodentia</taxon>
        <taxon>Myomorpha</taxon>
        <taxon>Muroidea</taxon>
        <taxon>Muridae</taxon>
        <taxon>Murinae</taxon>
        <taxon>Rattus</taxon>
    </lineage>
</organism>
<accession>P84903</accession>
<feature type="signal peptide" evidence="3">
    <location>
        <begin position="1"/>
        <end position="22"/>
    </location>
</feature>
<feature type="chain" id="PRO_0000248270" description="Stromal interaction molecule 1" evidence="3">
    <location>
        <begin position="23"/>
        <end position="685"/>
    </location>
</feature>
<feature type="topological domain" description="Extracellular" evidence="3">
    <location>
        <begin position="23"/>
        <end position="213"/>
    </location>
</feature>
<feature type="transmembrane region" description="Helical" evidence="3">
    <location>
        <begin position="214"/>
        <end position="234"/>
    </location>
</feature>
<feature type="topological domain" description="Cytoplasmic" evidence="3">
    <location>
        <begin position="235"/>
        <end position="685"/>
    </location>
</feature>
<feature type="domain" description="EF-hand 1" evidence="2">
    <location>
        <begin position="64"/>
        <end position="97"/>
    </location>
</feature>
<feature type="domain" description="EF-hand 2" evidence="2">
    <location>
        <begin position="102"/>
        <end position="126"/>
    </location>
</feature>
<feature type="domain" description="SAM" evidence="2 4">
    <location>
        <begin position="132"/>
        <end position="200"/>
    </location>
</feature>
<feature type="region of interest" description="Disordered" evidence="5">
    <location>
        <begin position="24"/>
        <end position="43"/>
    </location>
</feature>
<feature type="region of interest" description="SOAR/CAD" evidence="2">
    <location>
        <begin position="344"/>
        <end position="442"/>
    </location>
</feature>
<feature type="region of interest" description="Contributes to fast Ca(2+)-dependent inactivation of CRAC channels" evidence="2">
    <location>
        <begin position="475"/>
        <end position="483"/>
    </location>
</feature>
<feature type="region of interest" description="Disordered" evidence="5">
    <location>
        <begin position="490"/>
        <end position="542"/>
    </location>
</feature>
<feature type="region of interest" description="Disordered" evidence="5">
    <location>
        <begin position="596"/>
        <end position="685"/>
    </location>
</feature>
<feature type="region of interest" description="Required for generation of inwardly rectifying CRAC currents" evidence="2">
    <location>
        <begin position="672"/>
        <end position="685"/>
    </location>
</feature>
<feature type="coiled-coil region" evidence="2">
    <location>
        <begin position="248"/>
        <end position="442"/>
    </location>
</feature>
<feature type="short sequence motif" description="Microtubule tip localization signal" evidence="2">
    <location>
        <begin position="642"/>
        <end position="645"/>
    </location>
</feature>
<feature type="compositionally biased region" description="Low complexity" evidence="5">
    <location>
        <begin position="32"/>
        <end position="41"/>
    </location>
</feature>
<feature type="compositionally biased region" description="Low complexity" evidence="5">
    <location>
        <begin position="490"/>
        <end position="499"/>
    </location>
</feature>
<feature type="compositionally biased region" description="Basic and acidic residues" evidence="5">
    <location>
        <begin position="515"/>
        <end position="532"/>
    </location>
</feature>
<feature type="compositionally biased region" description="Low complexity" evidence="5">
    <location>
        <begin position="608"/>
        <end position="620"/>
    </location>
</feature>
<feature type="compositionally biased region" description="Acidic residues" evidence="5">
    <location>
        <begin position="655"/>
        <end position="666"/>
    </location>
</feature>
<feature type="compositionally biased region" description="Basic residues" evidence="5">
    <location>
        <begin position="670"/>
        <end position="685"/>
    </location>
</feature>
<feature type="binding site" evidence="2">
    <location>
        <position position="76"/>
    </location>
    <ligand>
        <name>Ca(2+)</name>
        <dbReference type="ChEBI" id="CHEBI:29108"/>
    </ligand>
</feature>
<feature type="binding site" evidence="2">
    <location>
        <position position="78"/>
    </location>
    <ligand>
        <name>Ca(2+)</name>
        <dbReference type="ChEBI" id="CHEBI:29108"/>
    </ligand>
</feature>
<feature type="binding site" evidence="2">
    <location>
        <position position="80"/>
    </location>
    <ligand>
        <name>Ca(2+)</name>
        <dbReference type="ChEBI" id="CHEBI:29108"/>
    </ligand>
</feature>
<feature type="binding site" evidence="2">
    <location>
        <position position="82"/>
    </location>
    <ligand>
        <name>Ca(2+)</name>
        <dbReference type="ChEBI" id="CHEBI:29108"/>
    </ligand>
</feature>
<feature type="binding site" evidence="2">
    <location>
        <position position="87"/>
    </location>
    <ligand>
        <name>Ca(2+)</name>
        <dbReference type="ChEBI" id="CHEBI:29108"/>
    </ligand>
</feature>
<feature type="modified residue" description="Phosphoserine" evidence="10">
    <location>
        <position position="257"/>
    </location>
</feature>
<feature type="modified residue" description="Phosphothreonine" evidence="1">
    <location>
        <position position="504"/>
    </location>
</feature>
<feature type="modified residue" description="Phosphoserine" evidence="10">
    <location>
        <position position="512"/>
    </location>
</feature>
<feature type="modified residue" description="Phosphothreonine" evidence="2">
    <location>
        <position position="517"/>
    </location>
</feature>
<feature type="modified residue" description="Phosphoserine" evidence="10">
    <location>
        <position position="519"/>
    </location>
</feature>
<feature type="modified residue" description="Phosphoserine" evidence="10">
    <location>
        <position position="521"/>
    </location>
</feature>
<feature type="modified residue" description="Phosphoserine" evidence="2">
    <location>
        <position position="523"/>
    </location>
</feature>
<feature type="modified residue" description="Phosphoserine" evidence="1">
    <location>
        <position position="524"/>
    </location>
</feature>
<feature type="modified residue" description="Phosphoserine" evidence="10">
    <location>
        <position position="567"/>
    </location>
</feature>
<feature type="modified residue" description="Phosphoserine" evidence="10">
    <location>
        <position position="575"/>
    </location>
</feature>
<feature type="modified residue" description="Phosphoserine" evidence="2">
    <location>
        <position position="602"/>
    </location>
</feature>
<feature type="modified residue" description="Phosphoserine" evidence="2">
    <location>
        <position position="608"/>
    </location>
</feature>
<feature type="modified residue" description="Phosphoserine" evidence="2">
    <location>
        <position position="618"/>
    </location>
</feature>
<feature type="modified residue" description="Phosphoserine" evidence="2">
    <location>
        <position position="621"/>
    </location>
</feature>
<feature type="modified residue" description="Phosphoserine" evidence="2">
    <location>
        <position position="628"/>
    </location>
</feature>
<feature type="modified residue" description="Phosphoserine" evidence="10">
    <location>
        <position position="660"/>
    </location>
</feature>
<feature type="modified residue" description="Phosphothreonine" evidence="2">
    <location>
        <position position="665"/>
    </location>
</feature>
<feature type="modified residue" description="Phosphoserine" evidence="10">
    <location>
        <position position="668"/>
    </location>
</feature>
<feature type="glycosylation site" description="N-linked (GlcNAc...) asparagine" evidence="2">
    <location>
        <position position="131"/>
    </location>
</feature>
<feature type="glycosylation site" description="N-linked (GlcNAc...) asparagine" evidence="2">
    <location>
        <position position="171"/>
    </location>
</feature>
<feature type="mutagenesis site" description="Increases Ca(2+) influx through activation of CRAC channels, even when Ca(2+) stores are not depleted." evidence="7">
    <original>D</original>
    <variation>A</variation>
    <location>
        <position position="76"/>
    </location>
</feature>
<feature type="mutagenesis site" description="Increases Ca(2+) influx through activation of CRAC channels, even when Ca(2+) stores are not depleted." evidence="7">
    <original>D</original>
    <variation>A</variation>
    <location>
        <position position="78"/>
    </location>
</feature>
<feature type="mutagenesis site" description="Increases Ca(2+) influx through activation of CRAC channels, even when Ca(2+) stores are not depleted." evidence="7">
    <original>E</original>
    <variation>Q</variation>
    <location>
        <position position="87"/>
    </location>
</feature>
<reference evidence="8" key="1">
    <citation type="journal article" date="2004" name="Nature">
        <title>Genome sequence of the Brown Norway rat yields insights into mammalian evolution.</title>
        <authorList>
            <person name="Gibbs R.A."/>
            <person name="Weinstock G.M."/>
            <person name="Metzker M.L."/>
            <person name="Muzny D.M."/>
            <person name="Sodergren E.J."/>
            <person name="Scherer S."/>
            <person name="Scott G."/>
            <person name="Steffen D."/>
            <person name="Worley K.C."/>
            <person name="Burch P.E."/>
            <person name="Okwuonu G."/>
            <person name="Hines S."/>
            <person name="Lewis L."/>
            <person name="Deramo C."/>
            <person name="Delgado O."/>
            <person name="Dugan-Rocha S."/>
            <person name="Miner G."/>
            <person name="Morgan M."/>
            <person name="Hawes A."/>
            <person name="Gill R."/>
            <person name="Holt R.A."/>
            <person name="Adams M.D."/>
            <person name="Amanatides P.G."/>
            <person name="Baden-Tillson H."/>
            <person name="Barnstead M."/>
            <person name="Chin S."/>
            <person name="Evans C.A."/>
            <person name="Ferriera S."/>
            <person name="Fosler C."/>
            <person name="Glodek A."/>
            <person name="Gu Z."/>
            <person name="Jennings D."/>
            <person name="Kraft C.L."/>
            <person name="Nguyen T."/>
            <person name="Pfannkoch C.M."/>
            <person name="Sitter C."/>
            <person name="Sutton G.G."/>
            <person name="Venter J.C."/>
            <person name="Woodage T."/>
            <person name="Smith D."/>
            <person name="Lee H.-M."/>
            <person name="Gustafson E."/>
            <person name="Cahill P."/>
            <person name="Kana A."/>
            <person name="Doucette-Stamm L."/>
            <person name="Weinstock K."/>
            <person name="Fechtel K."/>
            <person name="Weiss R.B."/>
            <person name="Dunn D.M."/>
            <person name="Green E.D."/>
            <person name="Blakesley R.W."/>
            <person name="Bouffard G.G."/>
            <person name="De Jong P.J."/>
            <person name="Osoegawa K."/>
            <person name="Zhu B."/>
            <person name="Marra M."/>
            <person name="Schein J."/>
            <person name="Bosdet I."/>
            <person name="Fjell C."/>
            <person name="Jones S."/>
            <person name="Krzywinski M."/>
            <person name="Mathewson C."/>
            <person name="Siddiqui A."/>
            <person name="Wye N."/>
            <person name="McPherson J."/>
            <person name="Zhao S."/>
            <person name="Fraser C.M."/>
            <person name="Shetty J."/>
            <person name="Shatsman S."/>
            <person name="Geer K."/>
            <person name="Chen Y."/>
            <person name="Abramzon S."/>
            <person name="Nierman W.C."/>
            <person name="Havlak P.H."/>
            <person name="Chen R."/>
            <person name="Durbin K.J."/>
            <person name="Egan A."/>
            <person name="Ren Y."/>
            <person name="Song X.-Z."/>
            <person name="Li B."/>
            <person name="Liu Y."/>
            <person name="Qin X."/>
            <person name="Cawley S."/>
            <person name="Cooney A.J."/>
            <person name="D'Souza L.M."/>
            <person name="Martin K."/>
            <person name="Wu J.Q."/>
            <person name="Gonzalez-Garay M.L."/>
            <person name="Jackson A.R."/>
            <person name="Kalafus K.J."/>
            <person name="McLeod M.P."/>
            <person name="Milosavljevic A."/>
            <person name="Virk D."/>
            <person name="Volkov A."/>
            <person name="Wheeler D.A."/>
            <person name="Zhang Z."/>
            <person name="Bailey J.A."/>
            <person name="Eichler E.E."/>
            <person name="Tuzun E."/>
            <person name="Birney E."/>
            <person name="Mongin E."/>
            <person name="Ureta-Vidal A."/>
            <person name="Woodwark C."/>
            <person name="Zdobnov E."/>
            <person name="Bork P."/>
            <person name="Suyama M."/>
            <person name="Torrents D."/>
            <person name="Alexandersson M."/>
            <person name="Trask B.J."/>
            <person name="Young J.M."/>
            <person name="Huang H."/>
            <person name="Wang H."/>
            <person name="Xing H."/>
            <person name="Daniels S."/>
            <person name="Gietzen D."/>
            <person name="Schmidt J."/>
            <person name="Stevens K."/>
            <person name="Vitt U."/>
            <person name="Wingrove J."/>
            <person name="Camara F."/>
            <person name="Mar Alba M."/>
            <person name="Abril J.F."/>
            <person name="Guigo R."/>
            <person name="Smit A."/>
            <person name="Dubchak I."/>
            <person name="Rubin E.M."/>
            <person name="Couronne O."/>
            <person name="Poliakov A."/>
            <person name="Huebner N."/>
            <person name="Ganten D."/>
            <person name="Goesele C."/>
            <person name="Hummel O."/>
            <person name="Kreitler T."/>
            <person name="Lee Y.-A."/>
            <person name="Monti J."/>
            <person name="Schulz H."/>
            <person name="Zimdahl H."/>
            <person name="Himmelbauer H."/>
            <person name="Lehrach H."/>
            <person name="Jacob H.J."/>
            <person name="Bromberg S."/>
            <person name="Gullings-Handley J."/>
            <person name="Jensen-Seaman M.I."/>
            <person name="Kwitek A.E."/>
            <person name="Lazar J."/>
            <person name="Pasko D."/>
            <person name="Tonellato P.J."/>
            <person name="Twigger S."/>
            <person name="Ponting C.P."/>
            <person name="Duarte J.M."/>
            <person name="Rice S."/>
            <person name="Goodstadt L."/>
            <person name="Beatson S.A."/>
            <person name="Emes R.D."/>
            <person name="Winter E.E."/>
            <person name="Webber C."/>
            <person name="Brandt P."/>
            <person name="Nyakatura G."/>
            <person name="Adetobi M."/>
            <person name="Chiaromonte F."/>
            <person name="Elnitski L."/>
            <person name="Eswara P."/>
            <person name="Hardison R.C."/>
            <person name="Hou M."/>
            <person name="Kolbe D."/>
            <person name="Makova K."/>
            <person name="Miller W."/>
            <person name="Nekrutenko A."/>
            <person name="Riemer C."/>
            <person name="Schwartz S."/>
            <person name="Taylor J."/>
            <person name="Yang S."/>
            <person name="Zhang Y."/>
            <person name="Lindpaintner K."/>
            <person name="Andrews T.D."/>
            <person name="Caccamo M."/>
            <person name="Clamp M."/>
            <person name="Clarke L."/>
            <person name="Curwen V."/>
            <person name="Durbin R.M."/>
            <person name="Eyras E."/>
            <person name="Searle S.M."/>
            <person name="Cooper G.M."/>
            <person name="Batzoglou S."/>
            <person name="Brudno M."/>
            <person name="Sidow A."/>
            <person name="Stone E.A."/>
            <person name="Payseur B.A."/>
            <person name="Bourque G."/>
            <person name="Lopez-Otin C."/>
            <person name="Puente X.S."/>
            <person name="Chakrabarti K."/>
            <person name="Chatterji S."/>
            <person name="Dewey C."/>
            <person name="Pachter L."/>
            <person name="Bray N."/>
            <person name="Yap V.B."/>
            <person name="Caspi A."/>
            <person name="Tesler G."/>
            <person name="Pevzner P.A."/>
            <person name="Haussler D."/>
            <person name="Roskin K.M."/>
            <person name="Baertsch R."/>
            <person name="Clawson H."/>
            <person name="Furey T.S."/>
            <person name="Hinrichs A.S."/>
            <person name="Karolchik D."/>
            <person name="Kent W.J."/>
            <person name="Rosenbloom K.R."/>
            <person name="Trumbower H."/>
            <person name="Weirauch M."/>
            <person name="Cooper D.N."/>
            <person name="Stenson P.D."/>
            <person name="Ma B."/>
            <person name="Brent M."/>
            <person name="Arumugam M."/>
            <person name="Shteynberg D."/>
            <person name="Copley R.R."/>
            <person name="Taylor M.S."/>
            <person name="Riethman H."/>
            <person name="Mudunuri U."/>
            <person name="Peterson J."/>
            <person name="Guyer M."/>
            <person name="Felsenfeld A."/>
            <person name="Old S."/>
            <person name="Mockrin S."/>
            <person name="Collins F.S."/>
        </authorList>
    </citation>
    <scope>NUCLEOTIDE SEQUENCE [LARGE SCALE GENOMIC DNA]</scope>
    <source>
        <strain evidence="6">Brown Norway</strain>
    </source>
</reference>
<reference evidence="8" key="2">
    <citation type="journal article" date="2005" name="Nature">
        <title>STIM1 is a Ca2+ sensor that activates CRAC channels and migrates from the Ca2+ store to the plasma membrane.</title>
        <authorList>
            <person name="Zhang S.L."/>
            <person name="Yu Y."/>
            <person name="Roos J."/>
            <person name="Kozak J.A."/>
            <person name="Deerinck T.J."/>
            <person name="Ellisman M.H."/>
            <person name="Stauderman K.A."/>
            <person name="Cahalan M.D."/>
        </authorList>
    </citation>
    <scope>FUNCTION</scope>
    <scope>SUBCELLULAR LOCATION</scope>
    <scope>MUTAGENESIS OF ASP-76; ASP-78 AND GLU-87</scope>
</reference>
<reference key="3">
    <citation type="journal article" date="2012" name="Nat. Commun.">
        <title>Quantitative maps of protein phosphorylation sites across 14 different rat organs and tissues.</title>
        <authorList>
            <person name="Lundby A."/>
            <person name="Secher A."/>
            <person name="Lage K."/>
            <person name="Nordsborg N.B."/>
            <person name="Dmytriyev A."/>
            <person name="Lundby C."/>
            <person name="Olsen J.V."/>
        </authorList>
    </citation>
    <scope>PHOSPHORYLATION [LARGE SCALE ANALYSIS] AT SER-257; SER-512; SER-519; SER-521; SER-567; SER-575; SER-660 AND SER-668</scope>
    <scope>IDENTIFICATION BY MASS SPECTROMETRY [LARGE SCALE ANALYSIS]</scope>
</reference>
<keyword id="KW-0106">Calcium</keyword>
<keyword id="KW-0109">Calcium transport</keyword>
<keyword id="KW-1003">Cell membrane</keyword>
<keyword id="KW-0175">Coiled coil</keyword>
<keyword id="KW-0963">Cytoplasm</keyword>
<keyword id="KW-0206">Cytoskeleton</keyword>
<keyword id="KW-0256">Endoplasmic reticulum</keyword>
<keyword id="KW-0325">Glycoprotein</keyword>
<keyword id="KW-0406">Ion transport</keyword>
<keyword id="KW-0472">Membrane</keyword>
<keyword id="KW-0479">Metal-binding</keyword>
<keyword id="KW-0493">Microtubule</keyword>
<keyword id="KW-0597">Phosphoprotein</keyword>
<keyword id="KW-1185">Reference proteome</keyword>
<keyword id="KW-0677">Repeat</keyword>
<keyword id="KW-0703">Sarcoplasmic reticulum</keyword>
<keyword id="KW-0732">Signal</keyword>
<keyword id="KW-0812">Transmembrane</keyword>
<keyword id="KW-1133">Transmembrane helix</keyword>
<keyword id="KW-0813">Transport</keyword>